<feature type="chain" id="PRO_0000118169" description="NAD(P)H-quinone oxidoreductase subunit 5, chloroplastic">
    <location>
        <begin position="1"/>
        <end position="746"/>
    </location>
</feature>
<feature type="transmembrane region" description="Helical" evidence="2">
    <location>
        <begin position="9"/>
        <end position="29"/>
    </location>
</feature>
<feature type="transmembrane region" description="Helical" evidence="2">
    <location>
        <begin position="40"/>
        <end position="60"/>
    </location>
</feature>
<feature type="transmembrane region" description="Helical" evidence="2">
    <location>
        <begin position="89"/>
        <end position="109"/>
    </location>
</feature>
<feature type="transmembrane region" description="Helical" evidence="2">
    <location>
        <begin position="125"/>
        <end position="145"/>
    </location>
</feature>
<feature type="transmembrane region" description="Helical" evidence="2">
    <location>
        <begin position="147"/>
        <end position="167"/>
    </location>
</feature>
<feature type="transmembrane region" description="Helical" evidence="2">
    <location>
        <begin position="185"/>
        <end position="205"/>
    </location>
</feature>
<feature type="transmembrane region" description="Helical" evidence="2">
    <location>
        <begin position="221"/>
        <end position="241"/>
    </location>
</feature>
<feature type="transmembrane region" description="Helical" evidence="2">
    <location>
        <begin position="258"/>
        <end position="278"/>
    </location>
</feature>
<feature type="transmembrane region" description="Helical" evidence="2">
    <location>
        <begin position="280"/>
        <end position="300"/>
    </location>
</feature>
<feature type="transmembrane region" description="Helical" evidence="2">
    <location>
        <begin position="327"/>
        <end position="347"/>
    </location>
</feature>
<feature type="transmembrane region" description="Helical" evidence="2">
    <location>
        <begin position="354"/>
        <end position="374"/>
    </location>
</feature>
<feature type="transmembrane region" description="Helical" evidence="2">
    <location>
        <begin position="396"/>
        <end position="416"/>
    </location>
</feature>
<feature type="transmembrane region" description="Helical" evidence="2">
    <location>
        <begin position="425"/>
        <end position="445"/>
    </location>
</feature>
<feature type="transmembrane region" description="Helical" evidence="2">
    <location>
        <begin position="547"/>
        <end position="567"/>
    </location>
</feature>
<feature type="transmembrane region" description="Helical" evidence="2">
    <location>
        <begin position="608"/>
        <end position="628"/>
    </location>
</feature>
<feature type="transmembrane region" description="Helical" evidence="2">
    <location>
        <begin position="723"/>
        <end position="743"/>
    </location>
</feature>
<evidence type="ECO:0000250" key="1"/>
<evidence type="ECO:0000255" key="2"/>
<evidence type="ECO:0000305" key="3"/>
<organism>
    <name type="scientific">Arabidopsis thaliana</name>
    <name type="common">Mouse-ear cress</name>
    <dbReference type="NCBI Taxonomy" id="3702"/>
    <lineage>
        <taxon>Eukaryota</taxon>
        <taxon>Viridiplantae</taxon>
        <taxon>Streptophyta</taxon>
        <taxon>Embryophyta</taxon>
        <taxon>Tracheophyta</taxon>
        <taxon>Spermatophyta</taxon>
        <taxon>Magnoliopsida</taxon>
        <taxon>eudicotyledons</taxon>
        <taxon>Gunneridae</taxon>
        <taxon>Pentapetalae</taxon>
        <taxon>rosids</taxon>
        <taxon>malvids</taxon>
        <taxon>Brassicales</taxon>
        <taxon>Brassicaceae</taxon>
        <taxon>Camelineae</taxon>
        <taxon>Arabidopsis</taxon>
    </lineage>
</organism>
<protein>
    <recommendedName>
        <fullName>NAD(P)H-quinone oxidoreductase subunit 5, chloroplastic</fullName>
        <ecNumber>7.1.1.-</ecNumber>
    </recommendedName>
    <alternativeName>
        <fullName>NAD(P)H dehydrogenase subunit 5</fullName>
    </alternativeName>
    <alternativeName>
        <fullName>NADH-plastoquinone oxidoreductase subunit 5</fullName>
    </alternativeName>
</protein>
<accession>P56752</accession>
<accession>Q9MS93</accession>
<dbReference type="EC" id="7.1.1.-"/>
<dbReference type="EMBL" id="AP000423">
    <property type="protein sequence ID" value="BAA84434.1"/>
    <property type="molecule type" value="Genomic_DNA"/>
</dbReference>
<dbReference type="EMBL" id="AF238049">
    <property type="protein sequence ID" value="AAF90035.1"/>
    <property type="molecule type" value="Genomic_DNA"/>
</dbReference>
<dbReference type="RefSeq" id="NP_051106.1">
    <property type="nucleotide sequence ID" value="NC_000932.1"/>
</dbReference>
<dbReference type="PDB" id="7WFF">
    <property type="method" value="EM"/>
    <property type="resolution" value="3.59 A"/>
    <property type="chains" value="F=1-746"/>
</dbReference>
<dbReference type="PDB" id="7WG5">
    <property type="method" value="EM"/>
    <property type="resolution" value="3.89 A"/>
    <property type="chains" value="F=1-746"/>
</dbReference>
<dbReference type="PDBsum" id="7WFF"/>
<dbReference type="PDBsum" id="7WG5"/>
<dbReference type="EMDB" id="EMD-32464"/>
<dbReference type="EMDB" id="EMD-32477"/>
<dbReference type="SMR" id="P56752"/>
<dbReference type="FunCoup" id="P56752">
    <property type="interactions" value="21"/>
</dbReference>
<dbReference type="STRING" id="3702.P56752"/>
<dbReference type="TCDB" id="3.D.1.8.1">
    <property type="family name" value="the h+ or na+-translocating nadh dehydrogenase (ndh) family"/>
</dbReference>
<dbReference type="GlyGen" id="P56752">
    <property type="glycosylation" value="1 site"/>
</dbReference>
<dbReference type="PaxDb" id="3702-ATCG01010.1"/>
<dbReference type="ProteomicsDB" id="249042"/>
<dbReference type="EnsemblPlants" id="ATCG01010.1">
    <property type="protein sequence ID" value="ATCG01010.1"/>
    <property type="gene ID" value="ATCG01010"/>
</dbReference>
<dbReference type="GeneID" id="844705"/>
<dbReference type="Gramene" id="ATCG01010.1">
    <property type="protein sequence ID" value="ATCG01010.1"/>
    <property type="gene ID" value="ATCG01010"/>
</dbReference>
<dbReference type="KEGG" id="ath:ArthCp071"/>
<dbReference type="Araport" id="ATCG01010"/>
<dbReference type="TAIR" id="ATCG01010">
    <property type="gene designation" value="NDHF"/>
</dbReference>
<dbReference type="eggNOG" id="KOG4668">
    <property type="taxonomic scope" value="Eukaryota"/>
</dbReference>
<dbReference type="HOGENOM" id="CLU_007100_6_0_1"/>
<dbReference type="InParanoid" id="P56752"/>
<dbReference type="OMA" id="WEKLINF"/>
<dbReference type="BioCyc" id="ARA:ATCG01010-MONOMER"/>
<dbReference type="PRO" id="PR:P56752"/>
<dbReference type="Proteomes" id="UP000006548">
    <property type="component" value="Chloroplast Pltd"/>
</dbReference>
<dbReference type="ExpressionAtlas" id="P56752">
    <property type="expression patterns" value="baseline and differential"/>
</dbReference>
<dbReference type="GO" id="GO:0009507">
    <property type="term" value="C:chloroplast"/>
    <property type="evidence" value="ECO:0007005"/>
    <property type="project" value="TAIR"/>
</dbReference>
<dbReference type="GO" id="GO:0009535">
    <property type="term" value="C:chloroplast thylakoid membrane"/>
    <property type="evidence" value="ECO:0007669"/>
    <property type="project" value="UniProtKB-SubCell"/>
</dbReference>
<dbReference type="GO" id="GO:0008137">
    <property type="term" value="F:NADH dehydrogenase (ubiquinone) activity"/>
    <property type="evidence" value="ECO:0007669"/>
    <property type="project" value="InterPro"/>
</dbReference>
<dbReference type="GO" id="GO:0048038">
    <property type="term" value="F:quinone binding"/>
    <property type="evidence" value="ECO:0007669"/>
    <property type="project" value="UniProtKB-KW"/>
</dbReference>
<dbReference type="GO" id="GO:0042773">
    <property type="term" value="P:ATP synthesis coupled electron transport"/>
    <property type="evidence" value="ECO:0007669"/>
    <property type="project" value="InterPro"/>
</dbReference>
<dbReference type="Gene3D" id="1.20.5.2700">
    <property type="match status" value="1"/>
</dbReference>
<dbReference type="InterPro" id="IPR002128">
    <property type="entry name" value="NADH_UbQ_OxRdtase_chlpt_su5_C"/>
</dbReference>
<dbReference type="InterPro" id="IPR018393">
    <property type="entry name" value="NADHpl_OxRdtase_5_subgr"/>
</dbReference>
<dbReference type="InterPro" id="IPR001750">
    <property type="entry name" value="ND/Mrp_TM"/>
</dbReference>
<dbReference type="InterPro" id="IPR003945">
    <property type="entry name" value="NU5C-like"/>
</dbReference>
<dbReference type="InterPro" id="IPR001516">
    <property type="entry name" value="Proton_antipo_N"/>
</dbReference>
<dbReference type="NCBIfam" id="TIGR01974">
    <property type="entry name" value="NDH_I_L"/>
    <property type="match status" value="1"/>
</dbReference>
<dbReference type="NCBIfam" id="NF005141">
    <property type="entry name" value="PRK06590.1"/>
    <property type="match status" value="1"/>
</dbReference>
<dbReference type="PANTHER" id="PTHR42829">
    <property type="entry name" value="NADH-UBIQUINONE OXIDOREDUCTASE CHAIN 5"/>
    <property type="match status" value="1"/>
</dbReference>
<dbReference type="PANTHER" id="PTHR42829:SF2">
    <property type="entry name" value="NADH-UBIQUINONE OXIDOREDUCTASE CHAIN 5"/>
    <property type="match status" value="1"/>
</dbReference>
<dbReference type="Pfam" id="PF01010">
    <property type="entry name" value="Proton_antipo_C"/>
    <property type="match status" value="1"/>
</dbReference>
<dbReference type="Pfam" id="PF00361">
    <property type="entry name" value="Proton_antipo_M"/>
    <property type="match status" value="1"/>
</dbReference>
<dbReference type="Pfam" id="PF00662">
    <property type="entry name" value="Proton_antipo_N"/>
    <property type="match status" value="1"/>
</dbReference>
<dbReference type="PRINTS" id="PR01434">
    <property type="entry name" value="NADHDHGNASE5"/>
</dbReference>
<dbReference type="PRINTS" id="PR01435">
    <property type="entry name" value="NPOXDRDTASE5"/>
</dbReference>
<keyword id="KW-0002">3D-structure</keyword>
<keyword id="KW-0150">Chloroplast</keyword>
<keyword id="KW-0472">Membrane</keyword>
<keyword id="KW-0520">NAD</keyword>
<keyword id="KW-0521">NADP</keyword>
<keyword id="KW-0934">Plastid</keyword>
<keyword id="KW-0618">Plastoquinone</keyword>
<keyword id="KW-0874">Quinone</keyword>
<keyword id="KW-1185">Reference proteome</keyword>
<keyword id="KW-0793">Thylakoid</keyword>
<keyword id="KW-1278">Translocase</keyword>
<keyword id="KW-0812">Transmembrane</keyword>
<keyword id="KW-1133">Transmembrane helix</keyword>
<keyword id="KW-0813">Transport</keyword>
<name>NU5C_ARATH</name>
<reference key="1">
    <citation type="journal article" date="1999" name="DNA Res.">
        <title>Complete structure of the chloroplast genome of Arabidopsis thaliana.</title>
        <authorList>
            <person name="Sato S."/>
            <person name="Nakamura Y."/>
            <person name="Kaneko T."/>
            <person name="Asamizu E."/>
            <person name="Tabata S."/>
        </authorList>
    </citation>
    <scope>NUCLEOTIDE SEQUENCE [LARGE SCALE GENOMIC DNA]</scope>
    <source>
        <strain>cv. Columbia</strain>
    </source>
</reference>
<reference key="2">
    <citation type="submission" date="2000-02" db="EMBL/GenBank/DDBJ databases">
        <title>Long branches in the seed plants and the root of the angiosperms.</title>
        <authorList>
            <person name="Graham S.W."/>
            <person name="Reeves P.A."/>
            <person name="Burns A."/>
            <person name="Olmstead R.G."/>
        </authorList>
    </citation>
    <scope>NUCLEOTIDE SEQUENCE [GENOMIC DNA] OF 18-426</scope>
</reference>
<comment type="function">
    <text evidence="1">NDH shuttles electrons from NAD(P)H:plastoquinone, via FMN and iron-sulfur (Fe-S) centers, to quinones in the photosynthetic chain and possibly in a chloroplast respiratory chain. The immediate electron acceptor for the enzyme in this species is believed to be plastoquinone. Couples the redox reaction to proton translocation, and thus conserves the redox energy in a proton gradient (By similarity).</text>
</comment>
<comment type="catalytic activity">
    <reaction>
        <text>a plastoquinone + NADH + (n+1) H(+)(in) = a plastoquinol + NAD(+) + n H(+)(out)</text>
        <dbReference type="Rhea" id="RHEA:42608"/>
        <dbReference type="Rhea" id="RHEA-COMP:9561"/>
        <dbReference type="Rhea" id="RHEA-COMP:9562"/>
        <dbReference type="ChEBI" id="CHEBI:15378"/>
        <dbReference type="ChEBI" id="CHEBI:17757"/>
        <dbReference type="ChEBI" id="CHEBI:57540"/>
        <dbReference type="ChEBI" id="CHEBI:57945"/>
        <dbReference type="ChEBI" id="CHEBI:62192"/>
    </reaction>
</comment>
<comment type="catalytic activity">
    <reaction>
        <text>a plastoquinone + NADPH + (n+1) H(+)(in) = a plastoquinol + NADP(+) + n H(+)(out)</text>
        <dbReference type="Rhea" id="RHEA:42612"/>
        <dbReference type="Rhea" id="RHEA-COMP:9561"/>
        <dbReference type="Rhea" id="RHEA-COMP:9562"/>
        <dbReference type="ChEBI" id="CHEBI:15378"/>
        <dbReference type="ChEBI" id="CHEBI:17757"/>
        <dbReference type="ChEBI" id="CHEBI:57783"/>
        <dbReference type="ChEBI" id="CHEBI:58349"/>
        <dbReference type="ChEBI" id="CHEBI:62192"/>
    </reaction>
</comment>
<comment type="subunit">
    <text evidence="1">NDH is composed of at least 16 different subunits, 5 of which are encoded in the nucleus.</text>
</comment>
<comment type="subcellular location">
    <subcellularLocation>
        <location evidence="1">Plastid</location>
        <location evidence="1">Chloroplast thylakoid membrane</location>
        <topology evidence="1">Multi-pass membrane protein</topology>
    </subcellularLocation>
</comment>
<comment type="similarity">
    <text evidence="3">Belongs to the complex I subunit 5 family.</text>
</comment>
<proteinExistence type="evidence at protein level"/>
<sequence>MEHTYQYSWIIPFIPLPVPILLGVGLLLFPTATKNLRRMWTFLSIFLLSIVMIFSIYLSIQQIFLSCIHQNVWSWTINNEFSFEFGYFIDPLTSIMSILITTVGILVLIYSDNYMSHDQGYLRFFAYMGFFNTSMLGLVTSSNLIQVYFFWELVGMCSYLLIGFWFTRPIAANACQKAFVTNRVGDFGLLLGILGLYWITGSFEFQDLFEIFNNLILNNRVNLLFLTLCAFLLFVGPIAKSAQFPLHVWLPDAMEGPTPISALIHAATMVAAGIFLVARLLPLFIVIPSIMYIISLIGIITVLLGATLALAQKDIKRGLAYSTMSQLGYMMLALGMGSYRSALFHLITHAYSKALLFLGSGSIIHSMEAIVGYSPDKSQNMILMGGLTKHVPITKTAFLIGTLSLCGIPPLACFWSKDEILNDSLLFSPIFAIIACSTAGLTAFYMFRIYLLTFEGHLNTYFLNYSGKKSGSFYSLSLWGKEEEKKLNKNFGLVPLLTMNNTKRASFFCNKTYKISNNVRNQIFITVENFGLNTRTFYYPHESDNTILFPMLILVLFTLFIGAIGIPFNQEGIDFDILSKFFTPSINLLHKNSQNFVDWYEFLRNATFSVSIAFFGIFIAYCLYKPFYSSLLNLTLLNSFQKWNSKRIHWEKLINFVYNWSYNRGYIDSFFKTSLIESIRRLAKQTTFFDKRIIDGITNGVGITSFFVGEVTKYIGGSRISSYLFLYLSYVLIFLMILFFFYFEKF</sequence>
<geneLocation type="chloroplast"/>
<gene>
    <name type="primary">ndhF</name>
    <name type="ordered locus">AtCg01010</name>
</gene>